<evidence type="ECO:0000255" key="1">
    <source>
        <dbReference type="HAMAP-Rule" id="MF_00412"/>
    </source>
</evidence>
<accession>C1CK18</accession>
<keyword id="KW-0028">Amino-acid biosynthesis</keyword>
<keyword id="KW-0963">Cytoplasm</keyword>
<keyword id="KW-0521">NADP</keyword>
<keyword id="KW-0560">Oxidoreductase</keyword>
<keyword id="KW-0641">Proline biosynthesis</keyword>
<protein>
    <recommendedName>
        <fullName evidence="1">Gamma-glutamyl phosphate reductase</fullName>
        <shortName evidence="1">GPR</shortName>
        <ecNumber evidence="1">1.2.1.41</ecNumber>
    </recommendedName>
    <alternativeName>
        <fullName evidence="1">Glutamate-5-semialdehyde dehydrogenase</fullName>
    </alternativeName>
    <alternativeName>
        <fullName evidence="1">Glutamyl-gamma-semialdehyde dehydrogenase</fullName>
        <shortName evidence="1">GSA dehydrogenase</shortName>
    </alternativeName>
</protein>
<gene>
    <name evidence="1" type="primary">proA</name>
    <name type="ordered locus">SPP_0939</name>
</gene>
<organism>
    <name type="scientific">Streptococcus pneumoniae (strain P1031)</name>
    <dbReference type="NCBI Taxonomy" id="488223"/>
    <lineage>
        <taxon>Bacteria</taxon>
        <taxon>Bacillati</taxon>
        <taxon>Bacillota</taxon>
        <taxon>Bacilli</taxon>
        <taxon>Lactobacillales</taxon>
        <taxon>Streptococcaceae</taxon>
        <taxon>Streptococcus</taxon>
    </lineage>
</organism>
<comment type="function">
    <text evidence="1">Catalyzes the NADPH-dependent reduction of L-glutamate 5-phosphate into L-glutamate 5-semialdehyde and phosphate. The product spontaneously undergoes cyclization to form 1-pyrroline-5-carboxylate.</text>
</comment>
<comment type="catalytic activity">
    <reaction evidence="1">
        <text>L-glutamate 5-semialdehyde + phosphate + NADP(+) = L-glutamyl 5-phosphate + NADPH + H(+)</text>
        <dbReference type="Rhea" id="RHEA:19541"/>
        <dbReference type="ChEBI" id="CHEBI:15378"/>
        <dbReference type="ChEBI" id="CHEBI:43474"/>
        <dbReference type="ChEBI" id="CHEBI:57783"/>
        <dbReference type="ChEBI" id="CHEBI:58066"/>
        <dbReference type="ChEBI" id="CHEBI:58274"/>
        <dbReference type="ChEBI" id="CHEBI:58349"/>
        <dbReference type="EC" id="1.2.1.41"/>
    </reaction>
</comment>
<comment type="pathway">
    <text evidence="1">Amino-acid biosynthesis; L-proline biosynthesis; L-glutamate 5-semialdehyde from L-glutamate: step 2/2.</text>
</comment>
<comment type="subcellular location">
    <subcellularLocation>
        <location evidence="1">Cytoplasm</location>
    </subcellularLocation>
</comment>
<comment type="similarity">
    <text evidence="1">Belongs to the gamma-glutamyl phosphate reductase family.</text>
</comment>
<name>PROA_STRZP</name>
<dbReference type="EC" id="1.2.1.41" evidence="1"/>
<dbReference type="EMBL" id="CP000920">
    <property type="protein sequence ID" value="ACO22200.1"/>
    <property type="molecule type" value="Genomic_DNA"/>
</dbReference>
<dbReference type="RefSeq" id="WP_000254688.1">
    <property type="nucleotide sequence ID" value="NC_012467.1"/>
</dbReference>
<dbReference type="SMR" id="C1CK18"/>
<dbReference type="KEGG" id="spp:SPP_0939"/>
<dbReference type="HOGENOM" id="CLU_030231_0_0_9"/>
<dbReference type="UniPathway" id="UPA00098">
    <property type="reaction ID" value="UER00360"/>
</dbReference>
<dbReference type="GO" id="GO:0005737">
    <property type="term" value="C:cytoplasm"/>
    <property type="evidence" value="ECO:0007669"/>
    <property type="project" value="UniProtKB-SubCell"/>
</dbReference>
<dbReference type="GO" id="GO:0004350">
    <property type="term" value="F:glutamate-5-semialdehyde dehydrogenase activity"/>
    <property type="evidence" value="ECO:0007669"/>
    <property type="project" value="UniProtKB-UniRule"/>
</dbReference>
<dbReference type="GO" id="GO:0050661">
    <property type="term" value="F:NADP binding"/>
    <property type="evidence" value="ECO:0007669"/>
    <property type="project" value="InterPro"/>
</dbReference>
<dbReference type="GO" id="GO:0055129">
    <property type="term" value="P:L-proline biosynthetic process"/>
    <property type="evidence" value="ECO:0007669"/>
    <property type="project" value="UniProtKB-UniRule"/>
</dbReference>
<dbReference type="CDD" id="cd07079">
    <property type="entry name" value="ALDH_F18-19_ProA-GPR"/>
    <property type="match status" value="1"/>
</dbReference>
<dbReference type="FunFam" id="3.40.309.10:FF:000006">
    <property type="entry name" value="Gamma-glutamyl phosphate reductase"/>
    <property type="match status" value="1"/>
</dbReference>
<dbReference type="Gene3D" id="3.40.605.10">
    <property type="entry name" value="Aldehyde Dehydrogenase, Chain A, domain 1"/>
    <property type="match status" value="1"/>
</dbReference>
<dbReference type="Gene3D" id="3.40.309.10">
    <property type="entry name" value="Aldehyde Dehydrogenase, Chain A, domain 2"/>
    <property type="match status" value="1"/>
</dbReference>
<dbReference type="HAMAP" id="MF_00412">
    <property type="entry name" value="ProA"/>
    <property type="match status" value="1"/>
</dbReference>
<dbReference type="InterPro" id="IPR016161">
    <property type="entry name" value="Ald_DH/histidinol_DH"/>
</dbReference>
<dbReference type="InterPro" id="IPR016163">
    <property type="entry name" value="Ald_DH_C"/>
</dbReference>
<dbReference type="InterPro" id="IPR016162">
    <property type="entry name" value="Ald_DH_N"/>
</dbReference>
<dbReference type="InterPro" id="IPR015590">
    <property type="entry name" value="Aldehyde_DH_dom"/>
</dbReference>
<dbReference type="InterPro" id="IPR020593">
    <property type="entry name" value="G-glutamylP_reductase_CS"/>
</dbReference>
<dbReference type="InterPro" id="IPR012134">
    <property type="entry name" value="Glu-5-SA_DH"/>
</dbReference>
<dbReference type="InterPro" id="IPR000965">
    <property type="entry name" value="GPR_dom"/>
</dbReference>
<dbReference type="NCBIfam" id="NF001221">
    <property type="entry name" value="PRK00197.1"/>
    <property type="match status" value="1"/>
</dbReference>
<dbReference type="NCBIfam" id="TIGR00407">
    <property type="entry name" value="proA"/>
    <property type="match status" value="1"/>
</dbReference>
<dbReference type="PANTHER" id="PTHR11063:SF8">
    <property type="entry name" value="DELTA-1-PYRROLINE-5-CARBOXYLATE SYNTHASE"/>
    <property type="match status" value="1"/>
</dbReference>
<dbReference type="PANTHER" id="PTHR11063">
    <property type="entry name" value="GLUTAMATE SEMIALDEHYDE DEHYDROGENASE"/>
    <property type="match status" value="1"/>
</dbReference>
<dbReference type="Pfam" id="PF00171">
    <property type="entry name" value="Aldedh"/>
    <property type="match status" value="1"/>
</dbReference>
<dbReference type="PIRSF" id="PIRSF000151">
    <property type="entry name" value="GPR"/>
    <property type="match status" value="1"/>
</dbReference>
<dbReference type="SUPFAM" id="SSF53720">
    <property type="entry name" value="ALDH-like"/>
    <property type="match status" value="1"/>
</dbReference>
<dbReference type="PROSITE" id="PS01223">
    <property type="entry name" value="PROA"/>
    <property type="match status" value="1"/>
</dbReference>
<sequence>MVSRQEQFEQVQAVKKSINTASEEVKNQALLAMADHLVAATEEILAANALDMAAAKGKISDVMLDRLYLDADRIEAMARGIREVVALPDPIGEVLETSQLENGLVITKKRVAMGVIGIIYESRPNVTSDAAALTLKSGNAVVLRSGKDAYQTTHAIVTALKKGLETTTIHPNVIQLVEDTSRESSYAMMKAKGYLDLLIPRGGAGLINAVVENAIVPVIETGTGIVHVYVDKDADEDKALSIINNAKTSRPSVCNAMEVLLVHENKAASILPRLDQMLVAERKEAGLEPIQFRLDSKASQFVSGQAAETQDFDTEFLDYVLAVKVVSSLEEAVSHIESHSTHHSDAIVTENAEAAAYFTDQVDSAAVYVNASTRFTDGGQFGLGCEMGISTQKLHARGPMGLKELTSYKYVVTGDGQIRE</sequence>
<feature type="chain" id="PRO_1000193661" description="Gamma-glutamyl phosphate reductase">
    <location>
        <begin position="1"/>
        <end position="420"/>
    </location>
</feature>
<proteinExistence type="inferred from homology"/>
<reference key="1">
    <citation type="journal article" date="2010" name="Genome Biol.">
        <title>Structure and dynamics of the pan-genome of Streptococcus pneumoniae and closely related species.</title>
        <authorList>
            <person name="Donati C."/>
            <person name="Hiller N.L."/>
            <person name="Tettelin H."/>
            <person name="Muzzi A."/>
            <person name="Croucher N.J."/>
            <person name="Angiuoli S.V."/>
            <person name="Oggioni M."/>
            <person name="Dunning Hotopp J.C."/>
            <person name="Hu F.Z."/>
            <person name="Riley D.R."/>
            <person name="Covacci A."/>
            <person name="Mitchell T.J."/>
            <person name="Bentley S.D."/>
            <person name="Kilian M."/>
            <person name="Ehrlich G.D."/>
            <person name="Rappuoli R."/>
            <person name="Moxon E.R."/>
            <person name="Masignani V."/>
        </authorList>
    </citation>
    <scope>NUCLEOTIDE SEQUENCE [LARGE SCALE GENOMIC DNA]</scope>
    <source>
        <strain>P1031</strain>
    </source>
</reference>